<gene>
    <name evidence="4" type="primary">RNC1</name>
    <name type="synonym">Zm.27802</name>
</gene>
<keyword id="KW-0150">Chloroplast</keyword>
<keyword id="KW-0507">mRNA processing</keyword>
<keyword id="KW-0508">mRNA splicing</keyword>
<keyword id="KW-0934">Plastid</keyword>
<keyword id="KW-1185">Reference proteome</keyword>
<keyword id="KW-0677">Repeat</keyword>
<keyword id="KW-0687">Ribonucleoprotein</keyword>
<keyword id="KW-0694">RNA-binding</keyword>
<keyword id="KW-0809">Transit peptide</keyword>
<reference key="1">
    <citation type="journal article" date="2007" name="Plant Cell">
        <title>A ribonuclease III domain protein functions in group II intron splicing in maize chloroplasts.</title>
        <authorList>
            <person name="Watkins K.P."/>
            <person name="Kroeger T.S."/>
            <person name="Cooke A.M."/>
            <person name="Williams-Carrier R.E."/>
            <person name="Friso G."/>
            <person name="Belcher S.E."/>
            <person name="van Wijk K.J."/>
            <person name="Barkan A."/>
        </authorList>
    </citation>
    <scope>NUCLEOTIDE SEQUENCE [MRNA]</scope>
    <scope>FUNCTION</scope>
    <scope>SUBUNIT</scope>
    <scope>SUBCELLULAR LOCATION</scope>
    <scope>DISRUPTION PHENOTYPE</scope>
</reference>
<reference key="2">
    <citation type="journal article" date="2009" name="Science">
        <title>The B73 maize genome: complexity, diversity, and dynamics.</title>
        <authorList>
            <person name="Schnable P.S."/>
            <person name="Ware D."/>
            <person name="Fulton R.S."/>
            <person name="Stein J.C."/>
            <person name="Wei F."/>
            <person name="Pasternak S."/>
            <person name="Liang C."/>
            <person name="Zhang J."/>
            <person name="Fulton L."/>
            <person name="Graves T.A."/>
            <person name="Minx P."/>
            <person name="Reily A.D."/>
            <person name="Courtney L."/>
            <person name="Kruchowski S.S."/>
            <person name="Tomlinson C."/>
            <person name="Strong C."/>
            <person name="Delehaunty K."/>
            <person name="Fronick C."/>
            <person name="Courtney B."/>
            <person name="Rock S.M."/>
            <person name="Belter E."/>
            <person name="Du F."/>
            <person name="Kim K."/>
            <person name="Abbott R.M."/>
            <person name="Cotton M."/>
            <person name="Levy A."/>
            <person name="Marchetto P."/>
            <person name="Ochoa K."/>
            <person name="Jackson S.M."/>
            <person name="Gillam B."/>
            <person name="Chen W."/>
            <person name="Yan L."/>
            <person name="Higginbotham J."/>
            <person name="Cardenas M."/>
            <person name="Waligorski J."/>
            <person name="Applebaum E."/>
            <person name="Phelps L."/>
            <person name="Falcone J."/>
            <person name="Kanchi K."/>
            <person name="Thane T."/>
            <person name="Scimone A."/>
            <person name="Thane N."/>
            <person name="Henke J."/>
            <person name="Wang T."/>
            <person name="Ruppert J."/>
            <person name="Shah N."/>
            <person name="Rotter K."/>
            <person name="Hodges J."/>
            <person name="Ingenthron E."/>
            <person name="Cordes M."/>
            <person name="Kohlberg S."/>
            <person name="Sgro J."/>
            <person name="Delgado B."/>
            <person name="Mead K."/>
            <person name="Chinwalla A."/>
            <person name="Leonard S."/>
            <person name="Crouse K."/>
            <person name="Collura K."/>
            <person name="Kudrna D."/>
            <person name="Currie J."/>
            <person name="He R."/>
            <person name="Angelova A."/>
            <person name="Rajasekar S."/>
            <person name="Mueller T."/>
            <person name="Lomeli R."/>
            <person name="Scara G."/>
            <person name="Ko A."/>
            <person name="Delaney K."/>
            <person name="Wissotski M."/>
            <person name="Lopez G."/>
            <person name="Campos D."/>
            <person name="Braidotti M."/>
            <person name="Ashley E."/>
            <person name="Golser W."/>
            <person name="Kim H."/>
            <person name="Lee S."/>
            <person name="Lin J."/>
            <person name="Dujmic Z."/>
            <person name="Kim W."/>
            <person name="Talag J."/>
            <person name="Zuccolo A."/>
            <person name="Fan C."/>
            <person name="Sebastian A."/>
            <person name="Kramer M."/>
            <person name="Spiegel L."/>
            <person name="Nascimento L."/>
            <person name="Zutavern T."/>
            <person name="Miller B."/>
            <person name="Ambroise C."/>
            <person name="Muller S."/>
            <person name="Spooner W."/>
            <person name="Narechania A."/>
            <person name="Ren L."/>
            <person name="Wei S."/>
            <person name="Kumari S."/>
            <person name="Faga B."/>
            <person name="Levy M.J."/>
            <person name="McMahan L."/>
            <person name="Van Buren P."/>
            <person name="Vaughn M.W."/>
            <person name="Ying K."/>
            <person name="Yeh C.-T."/>
            <person name="Emrich S.J."/>
            <person name="Jia Y."/>
            <person name="Kalyanaraman A."/>
            <person name="Hsia A.-P."/>
            <person name="Barbazuk W.B."/>
            <person name="Baucom R.S."/>
            <person name="Brutnell T.P."/>
            <person name="Carpita N.C."/>
            <person name="Chaparro C."/>
            <person name="Chia J.-M."/>
            <person name="Deragon J.-M."/>
            <person name="Estill J.C."/>
            <person name="Fu Y."/>
            <person name="Jeddeloh J.A."/>
            <person name="Han Y."/>
            <person name="Lee H."/>
            <person name="Li P."/>
            <person name="Lisch D.R."/>
            <person name="Liu S."/>
            <person name="Liu Z."/>
            <person name="Nagel D.H."/>
            <person name="McCann M.C."/>
            <person name="SanMiguel P."/>
            <person name="Myers A.M."/>
            <person name="Nettleton D."/>
            <person name="Nguyen J."/>
            <person name="Penning B.W."/>
            <person name="Ponnala L."/>
            <person name="Schneider K.L."/>
            <person name="Schwartz D.C."/>
            <person name="Sharma A."/>
            <person name="Soderlund C."/>
            <person name="Springer N.M."/>
            <person name="Sun Q."/>
            <person name="Wang H."/>
            <person name="Waterman M."/>
            <person name="Westerman R."/>
            <person name="Wolfgruber T.K."/>
            <person name="Yang L."/>
            <person name="Yu Y."/>
            <person name="Zhang L."/>
            <person name="Zhou S."/>
            <person name="Zhu Q."/>
            <person name="Bennetzen J.L."/>
            <person name="Dawe R.K."/>
            <person name="Jiang J."/>
            <person name="Jiang N."/>
            <person name="Presting G.G."/>
            <person name="Wessler S.R."/>
            <person name="Aluru S."/>
            <person name="Martienssen R.A."/>
            <person name="Clifton S.W."/>
            <person name="McCombie W.R."/>
            <person name="Wing R.A."/>
            <person name="Wilson R.K."/>
        </authorList>
    </citation>
    <scope>NUCLEOTIDE SEQUENCE [LARGE SCALE GENOMIC DNA]</scope>
    <source>
        <strain>cv. B73</strain>
    </source>
</reference>
<reference key="3">
    <citation type="journal article" date="2009" name="Plant Mol. Biol.">
        <title>Insights into corn genes derived from large-scale cDNA sequencing.</title>
        <authorList>
            <person name="Alexandrov N.N."/>
            <person name="Brover V.V."/>
            <person name="Freidin S."/>
            <person name="Troukhan M.E."/>
            <person name="Tatarinova T.V."/>
            <person name="Zhang H."/>
            <person name="Swaller T.J."/>
            <person name="Lu Y.-P."/>
            <person name="Bouck J."/>
            <person name="Flavell R.B."/>
            <person name="Feldmann K.A."/>
        </authorList>
    </citation>
    <scope>NUCLEOTIDE SEQUENCE [LARGE SCALE MRNA]</scope>
</reference>
<reference key="4">
    <citation type="journal article" date="2009" name="PLoS Genet.">
        <title>Sequencing, mapping, and analysis of 27,455 maize full-length cDNAs.</title>
        <authorList>
            <person name="Soderlund C."/>
            <person name="Descour A."/>
            <person name="Kudrna D."/>
            <person name="Bomhoff M."/>
            <person name="Boyd L."/>
            <person name="Currie J."/>
            <person name="Angelova A."/>
            <person name="Collura K."/>
            <person name="Wissotski M."/>
            <person name="Ashley E."/>
            <person name="Morrow D."/>
            <person name="Fernandes J."/>
            <person name="Walbot V."/>
            <person name="Yu Y."/>
        </authorList>
    </citation>
    <scope>NUCLEOTIDE SEQUENCE [LARGE SCALE MRNA]</scope>
    <source>
        <strain>cv. B73</strain>
    </source>
</reference>
<sequence length="525" mass="61018">MGPPAMAFQALTLTPLPFSLHSSSRRVRVLAVAADQTPPPAPPSEPANSPSRLLRELAQRKKAVSPKKKHPPRRFILKPPLDDERLTRRFLSSPQLSLKALPLLSSCLPSAPLSTADRTWMDEYLLEAKQALGYPLAPSETLGEGDDCPARHFDVLFYLAFQHLDPSSERTRMRHVRNGHSRLWFLGQYVLELAFCEFFLQRYPRESPGPMRERVFALIGKKVLPRWLKAASLHNLVFPYDDLDKMIRKDREPPSKAVFWAIFGAIYLCFGMPEVYRVLFEAFGMDPDDESCQPKLRRQLEDVDYVSVEFEKRQLTWQDVAAYRPPPDALFAHPRLFRACVPPGMHRFRGNIWDFDSRPKVMTTLGYPLPMNDRIPEITEARNIELGLGLQLCFLHPSKHKFEHPRFCYERLEYVGQKIQDLVMAERLLMKHLDAPGRWLAEKHRRTLMNKYCGRYLRDKHLQHYIIYGETVQDRFEHNRRLRNPSTTSVQQALHGLAYCVYGKPDVRRLMFEVFDFEQVQPKAV</sequence>
<accession>A6YSL1</accession>
<organism>
    <name type="scientific">Zea mays</name>
    <name type="common">Maize</name>
    <dbReference type="NCBI Taxonomy" id="4577"/>
    <lineage>
        <taxon>Eukaryota</taxon>
        <taxon>Viridiplantae</taxon>
        <taxon>Streptophyta</taxon>
        <taxon>Embryophyta</taxon>
        <taxon>Tracheophyta</taxon>
        <taxon>Spermatophyta</taxon>
        <taxon>Magnoliopsida</taxon>
        <taxon>Liliopsida</taxon>
        <taxon>Poales</taxon>
        <taxon>Poaceae</taxon>
        <taxon>PACMAD clade</taxon>
        <taxon>Panicoideae</taxon>
        <taxon>Andropogonodae</taxon>
        <taxon>Andropogoneae</taxon>
        <taxon>Tripsacinae</taxon>
        <taxon>Zea</taxon>
    </lineage>
</organism>
<feature type="transit peptide" description="Chloroplast" evidence="1">
    <location>
        <begin position="1"/>
        <end position="28"/>
    </location>
</feature>
<feature type="chain" id="PRO_0000435536" description="Ribonuclease III domain-containing protein RNC1, chloroplastic">
    <location>
        <begin position="29"/>
        <end position="525"/>
    </location>
</feature>
<feature type="domain" description="RNase III 1" evidence="2">
    <location>
        <begin position="125"/>
        <end position="271"/>
    </location>
</feature>
<feature type="domain" description="RNase III 2" evidence="2">
    <location>
        <begin position="403"/>
        <end position="503"/>
    </location>
</feature>
<name>RNC1_MAIZE</name>
<evidence type="ECO:0000255" key="1"/>
<evidence type="ECO:0000255" key="2">
    <source>
        <dbReference type="PROSITE-ProRule" id="PRU00177"/>
    </source>
</evidence>
<evidence type="ECO:0000269" key="3">
    <source>
    </source>
</evidence>
<evidence type="ECO:0000303" key="4">
    <source>
    </source>
</evidence>
<evidence type="ECO:0000305" key="5"/>
<comment type="function">
    <text evidence="3">Binds specific group II introns in chloroplasts and facilitates their splicing. Acts on both subgroup IIA and subgroup IIB introns. The substrates of the subgroup II also require the CRM domain proteins CAF1 or CAF2. Binds both single-stranded and double-stranded RNA non-specifically, but lacks endonuclease activity. Required for plastid ribosome biogenesis.</text>
</comment>
<comment type="subunit">
    <text evidence="3">Interacts with RNA. Part of large ribonucleo-protein particles that contain CAF1 and/or CAF2.</text>
</comment>
<comment type="interaction">
    <interactant intactId="EBI-15761735">
        <id>A6YSL1</id>
    </interactant>
    <interactant intactId="EBI-15761679">
        <id>B6TTV8</id>
        <label>WTF1</label>
    </interactant>
    <organismsDiffer>false</organismsDiffer>
    <experiments>4</experiments>
</comment>
<comment type="subcellular location">
    <subcellularLocation>
        <location evidence="3">Plastid</location>
        <location evidence="3">Chloroplast stroma</location>
    </subcellularLocation>
</comment>
<comment type="disruption phenotype">
    <text evidence="3">Pale green, albino, and albino stunted seedling phenotypes. Lack of plastid ribosomes.</text>
</comment>
<proteinExistence type="evidence at protein level"/>
<protein>
    <recommendedName>
        <fullName evidence="5">Ribonuclease III domain-containing protein RNC1, chloroplastic</fullName>
    </recommendedName>
    <alternativeName>
        <fullName evidence="4">Chloroplast ribonuclease III domain protein</fullName>
    </alternativeName>
</protein>
<dbReference type="EMBL" id="EF650835">
    <property type="protein sequence ID" value="ABR53724.1"/>
    <property type="molecule type" value="mRNA"/>
</dbReference>
<dbReference type="EMBL" id="EU971053">
    <property type="protein sequence ID" value="ACG43171.1"/>
    <property type="molecule type" value="mRNA"/>
</dbReference>
<dbReference type="EMBL" id="BT041100">
    <property type="protein sequence ID" value="ACF86105.1"/>
    <property type="molecule type" value="mRNA"/>
</dbReference>
<dbReference type="EMBL" id="BT064625">
    <property type="protein sequence ID" value="ACN29322.1"/>
    <property type="molecule type" value="mRNA"/>
</dbReference>
<dbReference type="RefSeq" id="NP_001106055.1">
    <property type="nucleotide sequence ID" value="NM_001112585.1"/>
</dbReference>
<dbReference type="DIP" id="DIP-48742N"/>
<dbReference type="FunCoup" id="A6YSL1">
    <property type="interactions" value="3803"/>
</dbReference>
<dbReference type="IntAct" id="A6YSL1">
    <property type="interactions" value="4"/>
</dbReference>
<dbReference type="STRING" id="4577.A6YSL1"/>
<dbReference type="PaxDb" id="4577-GRMZM2G035820_P01"/>
<dbReference type="GeneID" id="100125654"/>
<dbReference type="KEGG" id="zma:100125654"/>
<dbReference type="eggNOG" id="ENOG502QSFE">
    <property type="taxonomic scope" value="Eukaryota"/>
</dbReference>
<dbReference type="HOGENOM" id="CLU_018164_0_0_1"/>
<dbReference type="InParanoid" id="A6YSL1"/>
<dbReference type="OrthoDB" id="1897625at2759"/>
<dbReference type="BRENDA" id="3.1.26.3">
    <property type="organism ID" value="6752"/>
</dbReference>
<dbReference type="Proteomes" id="UP000007305">
    <property type="component" value="Unplaced"/>
</dbReference>
<dbReference type="ExpressionAtlas" id="A6YSL1">
    <property type="expression patterns" value="baseline and differential"/>
</dbReference>
<dbReference type="GO" id="GO:0009570">
    <property type="term" value="C:chloroplast stroma"/>
    <property type="evidence" value="ECO:0000314"/>
    <property type="project" value="UniProtKB"/>
</dbReference>
<dbReference type="GO" id="GO:0005634">
    <property type="term" value="C:nucleus"/>
    <property type="evidence" value="ECO:0000318"/>
    <property type="project" value="GO_Central"/>
</dbReference>
<dbReference type="GO" id="GO:1990904">
    <property type="term" value="C:ribonucleoprotein complex"/>
    <property type="evidence" value="ECO:0007669"/>
    <property type="project" value="UniProtKB-KW"/>
</dbReference>
<dbReference type="GO" id="GO:0003725">
    <property type="term" value="F:double-stranded RNA binding"/>
    <property type="evidence" value="ECO:0000314"/>
    <property type="project" value="UniProtKB"/>
</dbReference>
<dbReference type="GO" id="GO:0004525">
    <property type="term" value="F:ribonuclease III activity"/>
    <property type="evidence" value="ECO:0000318"/>
    <property type="project" value="GO_Central"/>
</dbReference>
<dbReference type="GO" id="GO:0003727">
    <property type="term" value="F:single-stranded RNA binding"/>
    <property type="evidence" value="ECO:0000314"/>
    <property type="project" value="UniProtKB"/>
</dbReference>
<dbReference type="GO" id="GO:0000373">
    <property type="term" value="P:Group II intron splicing"/>
    <property type="evidence" value="ECO:0000315"/>
    <property type="project" value="UniProtKB"/>
</dbReference>
<dbReference type="GO" id="GO:0006397">
    <property type="term" value="P:mRNA processing"/>
    <property type="evidence" value="ECO:0007669"/>
    <property type="project" value="UniProtKB-KW"/>
</dbReference>
<dbReference type="GO" id="GO:0010468">
    <property type="term" value="P:regulation of gene expression"/>
    <property type="evidence" value="ECO:0000318"/>
    <property type="project" value="GO_Central"/>
</dbReference>
<dbReference type="GO" id="GO:0042254">
    <property type="term" value="P:ribosome biogenesis"/>
    <property type="evidence" value="ECO:0000315"/>
    <property type="project" value="UniProtKB"/>
</dbReference>
<dbReference type="GO" id="GO:0006396">
    <property type="term" value="P:RNA processing"/>
    <property type="evidence" value="ECO:0000318"/>
    <property type="project" value="GO_Central"/>
</dbReference>
<dbReference type="CDD" id="cd00593">
    <property type="entry name" value="RIBOc"/>
    <property type="match status" value="2"/>
</dbReference>
<dbReference type="FunFam" id="1.10.1520.10:FF:000009">
    <property type="entry name" value="Ribonuclease III domain-containing protein RNC1, chloroplastic"/>
    <property type="match status" value="1"/>
</dbReference>
<dbReference type="FunFam" id="1.10.1520.10:FF:000011">
    <property type="entry name" value="Ribonuclease III domain-containing protein RNC1, chloroplastic"/>
    <property type="match status" value="1"/>
</dbReference>
<dbReference type="Gene3D" id="1.10.1520.10">
    <property type="entry name" value="Ribonuclease III domain"/>
    <property type="match status" value="2"/>
</dbReference>
<dbReference type="InterPro" id="IPR000999">
    <property type="entry name" value="RNase_III_dom"/>
</dbReference>
<dbReference type="InterPro" id="IPR036389">
    <property type="entry name" value="RNase_III_sf"/>
</dbReference>
<dbReference type="PANTHER" id="PTHR11207">
    <property type="entry name" value="RIBONUCLEASE III"/>
    <property type="match status" value="1"/>
</dbReference>
<dbReference type="PANTHER" id="PTHR11207:SF34">
    <property type="entry name" value="RIBONUCLEASE III DOMAIN-CONTAINING PROTEIN RNC1, CHLOROPLASTIC"/>
    <property type="match status" value="1"/>
</dbReference>
<dbReference type="Pfam" id="PF00636">
    <property type="entry name" value="Ribonuclease_3"/>
    <property type="match status" value="1"/>
</dbReference>
<dbReference type="SMART" id="SM00535">
    <property type="entry name" value="RIBOc"/>
    <property type="match status" value="1"/>
</dbReference>
<dbReference type="SUPFAM" id="SSF69065">
    <property type="entry name" value="RNase III domain-like"/>
    <property type="match status" value="2"/>
</dbReference>
<dbReference type="PROSITE" id="PS50142">
    <property type="entry name" value="RNASE_3_2"/>
    <property type="match status" value="1"/>
</dbReference>